<organism>
    <name type="scientific">Saccharomyces cerevisiae (strain ATCC 204508 / S288c)</name>
    <name type="common">Baker's yeast</name>
    <dbReference type="NCBI Taxonomy" id="559292"/>
    <lineage>
        <taxon>Eukaryota</taxon>
        <taxon>Fungi</taxon>
        <taxon>Dikarya</taxon>
        <taxon>Ascomycota</taxon>
        <taxon>Saccharomycotina</taxon>
        <taxon>Saccharomycetes</taxon>
        <taxon>Saccharomycetales</taxon>
        <taxon>Saccharomycetaceae</taxon>
        <taxon>Saccharomyces</taxon>
    </lineage>
</organism>
<proteinExistence type="uncertain"/>
<comment type="miscellaneous">
    <text evidence="1">Partially overlaps CDC19.</text>
</comment>
<comment type="caution">
    <text evidence="2">Product of a dubious gene prediction unlikely to encode a functional protein. Because of that it is not part of the S.cerevisiae S288c complete/reference proteome set.</text>
</comment>
<gene>
    <name type="ordered locus">YAL037C-B</name>
    <name type="ORF">YAL038C-A</name>
</gene>
<dbReference type="EMBL" id="U12980">
    <property type="status" value="NOT_ANNOTATED_CDS"/>
    <property type="molecule type" value="Genomic_DNA"/>
</dbReference>
<dbReference type="EMBL" id="AF479917">
    <property type="protein sequence ID" value="AAL79230.1"/>
    <property type="molecule type" value="Genomic_DNA"/>
</dbReference>
<dbReference type="PaxDb" id="4932-YAL037C-B"/>
<dbReference type="EnsemblFungi" id="YAL037C-B_mRNA">
    <property type="protein sequence ID" value="YAL037C-B"/>
    <property type="gene ID" value="YAL037C-B"/>
</dbReference>
<dbReference type="AGR" id="SGD:S000028592"/>
<dbReference type="SGD" id="S000028592">
    <property type="gene designation" value="YAL037C-B"/>
</dbReference>
<dbReference type="HOGENOM" id="CLU_858304_0_0_1"/>
<feature type="chain" id="PRO_0000299746" description="Putative uncharacterized protein YAL037C-B">
    <location>
        <begin position="1"/>
        <end position="324"/>
    </location>
</feature>
<accession>Q8TGR8</accession>
<name>YA37B_YEAST</name>
<reference key="1">
    <citation type="journal article" date="1995" name="Proc. Natl. Acad. Sci. U.S.A.">
        <title>The nucleotide sequence of chromosome I from Saccharomyces cerevisiae.</title>
        <authorList>
            <person name="Bussey H."/>
            <person name="Kaback D.B."/>
            <person name="Zhong W.-W."/>
            <person name="Vo D.H."/>
            <person name="Clark M.W."/>
            <person name="Fortin N."/>
            <person name="Hall J."/>
            <person name="Ouellette B.F.F."/>
            <person name="Keng T."/>
            <person name="Barton A.B."/>
            <person name="Su Y."/>
            <person name="Davies C.J."/>
            <person name="Storms R.K."/>
        </authorList>
    </citation>
    <scope>NUCLEOTIDE SEQUENCE [LARGE SCALE GENOMIC DNA]</scope>
    <source>
        <strain>ATCC 204508 / S288c</strain>
    </source>
</reference>
<reference key="2">
    <citation type="journal article" date="2014" name="G3 (Bethesda)">
        <title>The reference genome sequence of Saccharomyces cerevisiae: Then and now.</title>
        <authorList>
            <person name="Engel S.R."/>
            <person name="Dietrich F.S."/>
            <person name="Fisk D.G."/>
            <person name="Binkley G."/>
            <person name="Balakrishnan R."/>
            <person name="Costanzo M.C."/>
            <person name="Dwight S.S."/>
            <person name="Hitz B.C."/>
            <person name="Karra K."/>
            <person name="Nash R.S."/>
            <person name="Weng S."/>
            <person name="Wong E.D."/>
            <person name="Lloyd P."/>
            <person name="Skrzypek M.S."/>
            <person name="Miyasato S.R."/>
            <person name="Simison M."/>
            <person name="Cherry J.M."/>
        </authorList>
    </citation>
    <scope>GENOME REANNOTATION</scope>
    <source>
        <strain>ATCC 204508 / S288c</strain>
    </source>
</reference>
<reference key="3">
    <citation type="journal article" date="2002" name="Nat. Biotechnol.">
        <title>An integrated approach for finding overlooked genes in yeast.</title>
        <authorList>
            <person name="Kumar A."/>
            <person name="Harrison P.M."/>
            <person name="Cheung K.-H."/>
            <person name="Lan N."/>
            <person name="Echols N."/>
            <person name="Bertone P."/>
            <person name="Miller P."/>
            <person name="Gerstein M.B."/>
            <person name="Snyder M."/>
        </authorList>
    </citation>
    <scope>NUCLEOTIDE SEQUENCE [GENOMIC DNA]</scope>
</reference>
<protein>
    <recommendedName>
        <fullName>Putative uncharacterized protein YAL037C-B</fullName>
    </recommendedName>
</protein>
<sequence>MILFLNGRDLQSVGVTSTGLETLDGNVSVTLLQDTEFLSLFNTEVDTGFNIISPVRDRFLFENEWEDTSVQVRESSSSWASGNQDDWTVWSVLGNQSWGGTGSGQDNDSLGLLFENSSDSGGSDGFGGGGWLWSTVSHVIVVWQVSDSLFSNDSGFSHSGNGVDWVVTLGGFTRQHNTVSTIQDSVTDIGNFSSGWSWVVSHGFQHLGSTDNWLTSQVRLSNQFLLDSQDFWGWDFNTQVTSGNHNTVSDLQDFVEVVNTLLVFNLDNDLDVLTLFTQDFSDGQNIVGGSDERSEDHVDTVLDTESQIFLVLFRQSWQIDIGTW</sequence>
<evidence type="ECO:0000305" key="1"/>
<evidence type="ECO:0000305" key="2">
    <source>
    </source>
</evidence>